<protein>
    <recommendedName>
        <fullName evidence="1">Lipoprotein signal peptidase</fullName>
        <ecNumber evidence="1">3.4.23.36</ecNumber>
    </recommendedName>
    <alternativeName>
        <fullName evidence="1">Prolipoprotein signal peptidase</fullName>
    </alternativeName>
    <alternativeName>
        <fullName evidence="1">Signal peptidase II</fullName>
        <shortName evidence="1">SPase II</shortName>
    </alternativeName>
</protein>
<reference key="1">
    <citation type="journal article" date="2007" name="Nat. Genet.">
        <title>Genomic analysis of Bartonella identifies type IV secretion systems as host adaptability factors.</title>
        <authorList>
            <person name="Saenz H.L."/>
            <person name="Engel P."/>
            <person name="Stoeckli M.C."/>
            <person name="Lanz C."/>
            <person name="Raddatz G."/>
            <person name="Vayssier-Taussat M."/>
            <person name="Birtles R."/>
            <person name="Schuster S.C."/>
            <person name="Dehio C."/>
        </authorList>
    </citation>
    <scope>NUCLEOTIDE SEQUENCE [LARGE SCALE GENOMIC DNA]</scope>
    <source>
        <strain>CIP 105476 / IBS 506</strain>
    </source>
</reference>
<evidence type="ECO:0000255" key="1">
    <source>
        <dbReference type="HAMAP-Rule" id="MF_00161"/>
    </source>
</evidence>
<keyword id="KW-0064">Aspartyl protease</keyword>
<keyword id="KW-0997">Cell inner membrane</keyword>
<keyword id="KW-1003">Cell membrane</keyword>
<keyword id="KW-0378">Hydrolase</keyword>
<keyword id="KW-0472">Membrane</keyword>
<keyword id="KW-0645">Protease</keyword>
<keyword id="KW-0812">Transmembrane</keyword>
<keyword id="KW-1133">Transmembrane helix</keyword>
<sequence length="167" mass="19329">MIRKSLLFLLLGLTLTAGLDQAVKYWVMQNMPLGTEIPLIPFLSLYHVRNSGIAFSFFSSFSHWGIIAITIIVIIFLLWLWKNTEDNKFLMRFGLVLIIGGAIGNLIDRIRFHHVTDYILFYIDDIFYFAIFNLADSFITLGVIVILIEELRTWMKAKRDSNHTSSH</sequence>
<feature type="chain" id="PRO_1000076916" description="Lipoprotein signal peptidase">
    <location>
        <begin position="1"/>
        <end position="167"/>
    </location>
</feature>
<feature type="transmembrane region" description="Helical" evidence="1">
    <location>
        <begin position="7"/>
        <end position="27"/>
    </location>
</feature>
<feature type="transmembrane region" description="Helical" evidence="1">
    <location>
        <begin position="61"/>
        <end position="81"/>
    </location>
</feature>
<feature type="transmembrane region" description="Helical" evidence="1">
    <location>
        <begin position="87"/>
        <end position="107"/>
    </location>
</feature>
<feature type="transmembrane region" description="Helical" evidence="1">
    <location>
        <begin position="126"/>
        <end position="146"/>
    </location>
</feature>
<feature type="active site" evidence="1">
    <location>
        <position position="117"/>
    </location>
</feature>
<feature type="active site" evidence="1">
    <location>
        <position position="136"/>
    </location>
</feature>
<dbReference type="EC" id="3.4.23.36" evidence="1"/>
<dbReference type="EMBL" id="AM260525">
    <property type="protein sequence ID" value="CAK00514.1"/>
    <property type="molecule type" value="Genomic_DNA"/>
</dbReference>
<dbReference type="RefSeq" id="WP_012230264.1">
    <property type="nucleotide sequence ID" value="NC_010161.1"/>
</dbReference>
<dbReference type="SMR" id="A9IL10"/>
<dbReference type="KEGG" id="btr:BT_0010"/>
<dbReference type="eggNOG" id="COG0597">
    <property type="taxonomic scope" value="Bacteria"/>
</dbReference>
<dbReference type="HOGENOM" id="CLU_083252_4_3_5"/>
<dbReference type="UniPathway" id="UPA00665"/>
<dbReference type="Proteomes" id="UP000001592">
    <property type="component" value="Chromosome"/>
</dbReference>
<dbReference type="GO" id="GO:0005886">
    <property type="term" value="C:plasma membrane"/>
    <property type="evidence" value="ECO:0007669"/>
    <property type="project" value="UniProtKB-SubCell"/>
</dbReference>
<dbReference type="GO" id="GO:0004190">
    <property type="term" value="F:aspartic-type endopeptidase activity"/>
    <property type="evidence" value="ECO:0007669"/>
    <property type="project" value="UniProtKB-UniRule"/>
</dbReference>
<dbReference type="GO" id="GO:0006508">
    <property type="term" value="P:proteolysis"/>
    <property type="evidence" value="ECO:0007669"/>
    <property type="project" value="UniProtKB-KW"/>
</dbReference>
<dbReference type="HAMAP" id="MF_00161">
    <property type="entry name" value="LspA"/>
    <property type="match status" value="1"/>
</dbReference>
<dbReference type="InterPro" id="IPR001872">
    <property type="entry name" value="Peptidase_A8"/>
</dbReference>
<dbReference type="NCBIfam" id="TIGR00077">
    <property type="entry name" value="lspA"/>
    <property type="match status" value="1"/>
</dbReference>
<dbReference type="PANTHER" id="PTHR33695">
    <property type="entry name" value="LIPOPROTEIN SIGNAL PEPTIDASE"/>
    <property type="match status" value="1"/>
</dbReference>
<dbReference type="PANTHER" id="PTHR33695:SF1">
    <property type="entry name" value="LIPOPROTEIN SIGNAL PEPTIDASE"/>
    <property type="match status" value="1"/>
</dbReference>
<dbReference type="Pfam" id="PF01252">
    <property type="entry name" value="Peptidase_A8"/>
    <property type="match status" value="1"/>
</dbReference>
<dbReference type="PRINTS" id="PR00781">
    <property type="entry name" value="LIPOSIGPTASE"/>
</dbReference>
<dbReference type="PROSITE" id="PS00855">
    <property type="entry name" value="SPASE_II"/>
    <property type="match status" value="1"/>
</dbReference>
<accession>A9IL10</accession>
<comment type="function">
    <text evidence="1">This protein specifically catalyzes the removal of signal peptides from prolipoproteins.</text>
</comment>
<comment type="catalytic activity">
    <reaction evidence="1">
        <text>Release of signal peptides from bacterial membrane prolipoproteins. Hydrolyzes -Xaa-Yaa-Zaa-|-(S,diacylglyceryl)Cys-, in which Xaa is hydrophobic (preferably Leu), and Yaa (Ala or Ser) and Zaa (Gly or Ala) have small, neutral side chains.</text>
        <dbReference type="EC" id="3.4.23.36"/>
    </reaction>
</comment>
<comment type="pathway">
    <text evidence="1">Protein modification; lipoprotein biosynthesis (signal peptide cleavage).</text>
</comment>
<comment type="subcellular location">
    <subcellularLocation>
        <location evidence="1">Cell inner membrane</location>
        <topology evidence="1">Multi-pass membrane protein</topology>
    </subcellularLocation>
</comment>
<comment type="similarity">
    <text evidence="1">Belongs to the peptidase A8 family.</text>
</comment>
<name>LSPA_BART1</name>
<organism>
    <name type="scientific">Bartonella tribocorum (strain CIP 105476 / IBS 506)</name>
    <dbReference type="NCBI Taxonomy" id="382640"/>
    <lineage>
        <taxon>Bacteria</taxon>
        <taxon>Pseudomonadati</taxon>
        <taxon>Pseudomonadota</taxon>
        <taxon>Alphaproteobacteria</taxon>
        <taxon>Hyphomicrobiales</taxon>
        <taxon>Bartonellaceae</taxon>
        <taxon>Bartonella</taxon>
    </lineage>
</organism>
<proteinExistence type="inferred from homology"/>
<gene>
    <name evidence="1" type="primary">lspA</name>
    <name type="ordered locus">BT_0010</name>
</gene>